<protein>
    <recommendedName>
        <fullName evidence="1">Replication factor C large subunit</fullName>
        <shortName evidence="1">RFC large subunit</shortName>
    </recommendedName>
    <alternativeName>
        <fullName evidence="1">Clamp loader large subunit</fullName>
    </alternativeName>
</protein>
<evidence type="ECO:0000255" key="1">
    <source>
        <dbReference type="HAMAP-Rule" id="MF_01508"/>
    </source>
</evidence>
<evidence type="ECO:0000256" key="2">
    <source>
        <dbReference type="SAM" id="MobiDB-lite"/>
    </source>
</evidence>
<feature type="chain" id="PRO_1000024485" description="Replication factor C large subunit">
    <location>
        <begin position="1"/>
        <end position="481"/>
    </location>
</feature>
<feature type="region of interest" description="Disordered" evidence="2">
    <location>
        <begin position="408"/>
        <end position="481"/>
    </location>
</feature>
<feature type="compositionally biased region" description="Basic and acidic residues" evidence="2">
    <location>
        <begin position="408"/>
        <end position="433"/>
    </location>
</feature>
<feature type="compositionally biased region" description="Basic and acidic residues" evidence="2">
    <location>
        <begin position="441"/>
        <end position="457"/>
    </location>
</feature>
<feature type="compositionally biased region" description="Polar residues" evidence="2">
    <location>
        <begin position="471"/>
        <end position="481"/>
    </location>
</feature>
<feature type="binding site" evidence="1">
    <location>
        <begin position="43"/>
        <end position="50"/>
    </location>
    <ligand>
        <name>ATP</name>
        <dbReference type="ChEBI" id="CHEBI:30616"/>
    </ligand>
</feature>
<reference key="1">
    <citation type="journal article" date="2015" name="Microbiology">
        <title>Genome of Methanoregula boonei 6A8 reveals adaptations to oligotrophic peatland environments.</title>
        <authorList>
            <person name="Braeuer S."/>
            <person name="Cadillo-Quiroz H."/>
            <person name="Kyrpides N."/>
            <person name="Woyke T."/>
            <person name="Goodwin L."/>
            <person name="Detter C."/>
            <person name="Podell S."/>
            <person name="Yavitt J.B."/>
            <person name="Zinder S.H."/>
        </authorList>
    </citation>
    <scope>NUCLEOTIDE SEQUENCE [LARGE SCALE GENOMIC DNA]</scope>
    <source>
        <strain>DSM 21154 / JCM 14090 / 6A8</strain>
    </source>
</reference>
<comment type="function">
    <text evidence="1">Part of the RFC clamp loader complex which loads the PCNA sliding clamp onto DNA.</text>
</comment>
<comment type="subunit">
    <text evidence="1">Heteromultimer composed of small subunits (RfcS) and large subunits (RfcL).</text>
</comment>
<comment type="similarity">
    <text evidence="1">Belongs to the activator 1 small subunits family. RfcL subfamily.</text>
</comment>
<sequence length="481" mass="53037">MEWAEKYRPEHLADIVGNTSAVRQMADWAKTWTARSKPLLLYGKPGIGKTSSVYALARDMNWDVIELNASDQRTAAVIERIAGAGSTTASLTGSARKLIIMDEADNLQGTADRGGAKAILECIKNARQPIVLIANDLYGLAAELRLRCEPVQFRALPARSIAPRLKYICSSEKIACSESAVHEIAESAEGDMRSAVNMLYASAIGRQSLDGKNVHTSQKDERVSIFSLVTAVFGKTSDEELIRLSRDVDEFPEDIEQWVEGSVHTITDPAGLGLAYRSLSRADEYIGYTYRRQYHTLWRYATAVMLLGVADASAGKGIHSRILPPERWQKMSVAKKQKAIRAAVLSRLAATMQLPQATLREKYMDIITLLVDLDPETFARELALDADGLNFFLNDKSRAQEILKSLAKVEREKEPEPKKKGRKKAESPAKDADPAPAVDPVPKEELPVKSAPEERPADPPAPEEPGRKTVAHNQSTLFDGF</sequence>
<dbReference type="EMBL" id="CP000780">
    <property type="protein sequence ID" value="ABS55592.1"/>
    <property type="molecule type" value="Genomic_DNA"/>
</dbReference>
<dbReference type="RefSeq" id="WP_012106619.1">
    <property type="nucleotide sequence ID" value="NC_009712.1"/>
</dbReference>
<dbReference type="SMR" id="A7I781"/>
<dbReference type="STRING" id="456442.Mboo_1074"/>
<dbReference type="GeneID" id="5409802"/>
<dbReference type="KEGG" id="mbn:Mboo_1074"/>
<dbReference type="eggNOG" id="arCOG00470">
    <property type="taxonomic scope" value="Archaea"/>
</dbReference>
<dbReference type="HOGENOM" id="CLU_027255_1_0_2"/>
<dbReference type="OrthoDB" id="8658at2157"/>
<dbReference type="Proteomes" id="UP000002408">
    <property type="component" value="Chromosome"/>
</dbReference>
<dbReference type="GO" id="GO:0005524">
    <property type="term" value="F:ATP binding"/>
    <property type="evidence" value="ECO:0007669"/>
    <property type="project" value="UniProtKB-UniRule"/>
</dbReference>
<dbReference type="GO" id="GO:0016887">
    <property type="term" value="F:ATP hydrolysis activity"/>
    <property type="evidence" value="ECO:0007669"/>
    <property type="project" value="InterPro"/>
</dbReference>
<dbReference type="GO" id="GO:0003689">
    <property type="term" value="F:DNA clamp loader activity"/>
    <property type="evidence" value="ECO:0007669"/>
    <property type="project" value="UniProtKB-UniRule"/>
</dbReference>
<dbReference type="GO" id="GO:0006260">
    <property type="term" value="P:DNA replication"/>
    <property type="evidence" value="ECO:0007669"/>
    <property type="project" value="UniProtKB-UniRule"/>
</dbReference>
<dbReference type="CDD" id="cd00009">
    <property type="entry name" value="AAA"/>
    <property type="match status" value="1"/>
</dbReference>
<dbReference type="CDD" id="cd18140">
    <property type="entry name" value="HLD_clamp_RFC"/>
    <property type="match status" value="1"/>
</dbReference>
<dbReference type="Gene3D" id="1.10.8.60">
    <property type="match status" value="1"/>
</dbReference>
<dbReference type="Gene3D" id="3.40.50.300">
    <property type="entry name" value="P-loop containing nucleotide triphosphate hydrolases"/>
    <property type="match status" value="1"/>
</dbReference>
<dbReference type="HAMAP" id="MF_01508">
    <property type="entry name" value="RfcL"/>
    <property type="match status" value="1"/>
</dbReference>
<dbReference type="InterPro" id="IPR003593">
    <property type="entry name" value="AAA+_ATPase"/>
</dbReference>
<dbReference type="InterPro" id="IPR003959">
    <property type="entry name" value="ATPase_AAA_core"/>
</dbReference>
<dbReference type="InterPro" id="IPR027417">
    <property type="entry name" value="P-loop_NTPase"/>
</dbReference>
<dbReference type="InterPro" id="IPR023935">
    <property type="entry name" value="Rep_factor-C_lsu"/>
</dbReference>
<dbReference type="InterPro" id="IPR047854">
    <property type="entry name" value="RFC_lid"/>
</dbReference>
<dbReference type="NCBIfam" id="NF003229">
    <property type="entry name" value="PRK04195.1-5"/>
    <property type="match status" value="1"/>
</dbReference>
<dbReference type="NCBIfam" id="NF003232">
    <property type="entry name" value="PRK04195.2-2"/>
    <property type="match status" value="1"/>
</dbReference>
<dbReference type="PANTHER" id="PTHR23389">
    <property type="entry name" value="CHROMOSOME TRANSMISSION FIDELITY FACTOR 18"/>
    <property type="match status" value="1"/>
</dbReference>
<dbReference type="PANTHER" id="PTHR23389:SF6">
    <property type="entry name" value="REPLICATION FACTOR C SUBUNIT 1"/>
    <property type="match status" value="1"/>
</dbReference>
<dbReference type="Pfam" id="PF00004">
    <property type="entry name" value="AAA"/>
    <property type="match status" value="1"/>
</dbReference>
<dbReference type="Pfam" id="PF21960">
    <property type="entry name" value="RCF1-5-like_lid"/>
    <property type="match status" value="1"/>
</dbReference>
<dbReference type="SMART" id="SM00382">
    <property type="entry name" value="AAA"/>
    <property type="match status" value="1"/>
</dbReference>
<dbReference type="SUPFAM" id="SSF52540">
    <property type="entry name" value="P-loop containing nucleoside triphosphate hydrolases"/>
    <property type="match status" value="1"/>
</dbReference>
<organism>
    <name type="scientific">Methanoregula boonei (strain DSM 21154 / JCM 14090 / 6A8)</name>
    <dbReference type="NCBI Taxonomy" id="456442"/>
    <lineage>
        <taxon>Archaea</taxon>
        <taxon>Methanobacteriati</taxon>
        <taxon>Methanobacteriota</taxon>
        <taxon>Stenosarchaea group</taxon>
        <taxon>Methanomicrobia</taxon>
        <taxon>Methanomicrobiales</taxon>
        <taxon>Methanoregulaceae</taxon>
        <taxon>Methanoregula</taxon>
    </lineage>
</organism>
<keyword id="KW-0067">ATP-binding</keyword>
<keyword id="KW-0235">DNA replication</keyword>
<keyword id="KW-0547">Nucleotide-binding</keyword>
<keyword id="KW-1185">Reference proteome</keyword>
<proteinExistence type="inferred from homology"/>
<gene>
    <name evidence="1" type="primary">rfcL</name>
    <name type="ordered locus">Mboo_1074</name>
</gene>
<accession>A7I781</accession>
<name>RFCL_METB6</name>